<organism>
    <name type="scientific">Alkaliphilus oremlandii (strain OhILAs)</name>
    <name type="common">Clostridium oremlandii (strain OhILAs)</name>
    <dbReference type="NCBI Taxonomy" id="350688"/>
    <lineage>
        <taxon>Bacteria</taxon>
        <taxon>Bacillati</taxon>
        <taxon>Bacillota</taxon>
        <taxon>Clostridia</taxon>
        <taxon>Peptostreptococcales</taxon>
        <taxon>Natronincolaceae</taxon>
        <taxon>Alkaliphilus</taxon>
    </lineage>
</organism>
<gene>
    <name evidence="1" type="primary">sfsA</name>
    <name type="ordered locus">Clos_2708</name>
</gene>
<evidence type="ECO:0000255" key="1">
    <source>
        <dbReference type="HAMAP-Rule" id="MF_00095"/>
    </source>
</evidence>
<comment type="similarity">
    <text evidence="1">Belongs to the SfsA family.</text>
</comment>
<sequence length="235" mass="26772">MKYKKVVEGIFLKRPNRFIAQVLIDGQEETVHVKNTGRCRELLIPGVKVLLEDGRDNPNRKTKYSLISVWKGDMLINMDSQAPNAAAFTAIKENRVKEIQSLTHLKREVTFGKSRFDLYFETLNNGTLQKGFIEVKGVTLENEGICMFPDAPTERGTKHVLEMVEAVKQGYRGILLFVIQMKGPNLFKLNWEMDRAFSQAVQFASENGVEVLAYDAVIEKDEIILGDRVDIDYRA</sequence>
<accession>A8MKA7</accession>
<dbReference type="EMBL" id="CP000853">
    <property type="protein sequence ID" value="ABW20239.1"/>
    <property type="molecule type" value="Genomic_DNA"/>
</dbReference>
<dbReference type="RefSeq" id="WP_012160546.1">
    <property type="nucleotide sequence ID" value="NC_009922.1"/>
</dbReference>
<dbReference type="SMR" id="A8MKA7"/>
<dbReference type="STRING" id="350688.Clos_2708"/>
<dbReference type="KEGG" id="aoe:Clos_2708"/>
<dbReference type="eggNOG" id="COG1489">
    <property type="taxonomic scope" value="Bacteria"/>
</dbReference>
<dbReference type="HOGENOM" id="CLU_052299_1_0_9"/>
<dbReference type="OrthoDB" id="9802365at2"/>
<dbReference type="Proteomes" id="UP000000269">
    <property type="component" value="Chromosome"/>
</dbReference>
<dbReference type="GO" id="GO:0003677">
    <property type="term" value="F:DNA binding"/>
    <property type="evidence" value="ECO:0007669"/>
    <property type="project" value="InterPro"/>
</dbReference>
<dbReference type="CDD" id="cd22359">
    <property type="entry name" value="SfsA-like_bacterial"/>
    <property type="match status" value="1"/>
</dbReference>
<dbReference type="FunFam" id="2.40.50.580:FF:000002">
    <property type="entry name" value="Sugar fermentation stimulation protein homolog"/>
    <property type="match status" value="1"/>
</dbReference>
<dbReference type="Gene3D" id="2.40.50.580">
    <property type="match status" value="1"/>
</dbReference>
<dbReference type="Gene3D" id="3.40.1350.60">
    <property type="match status" value="1"/>
</dbReference>
<dbReference type="HAMAP" id="MF_00095">
    <property type="entry name" value="SfsA"/>
    <property type="match status" value="1"/>
</dbReference>
<dbReference type="InterPro" id="IPR005224">
    <property type="entry name" value="SfsA"/>
</dbReference>
<dbReference type="InterPro" id="IPR040452">
    <property type="entry name" value="SfsA_C"/>
</dbReference>
<dbReference type="InterPro" id="IPR041465">
    <property type="entry name" value="SfsA_N"/>
</dbReference>
<dbReference type="NCBIfam" id="TIGR00230">
    <property type="entry name" value="sfsA"/>
    <property type="match status" value="1"/>
</dbReference>
<dbReference type="PANTHER" id="PTHR30545">
    <property type="entry name" value="SUGAR FERMENTATION STIMULATION PROTEIN A"/>
    <property type="match status" value="1"/>
</dbReference>
<dbReference type="PANTHER" id="PTHR30545:SF2">
    <property type="entry name" value="SUGAR FERMENTATION STIMULATION PROTEIN A"/>
    <property type="match status" value="1"/>
</dbReference>
<dbReference type="Pfam" id="PF03749">
    <property type="entry name" value="SfsA"/>
    <property type="match status" value="1"/>
</dbReference>
<dbReference type="Pfam" id="PF17746">
    <property type="entry name" value="SfsA_N"/>
    <property type="match status" value="1"/>
</dbReference>
<feature type="chain" id="PRO_0000340132" description="Sugar fermentation stimulation protein homolog">
    <location>
        <begin position="1"/>
        <end position="235"/>
    </location>
</feature>
<keyword id="KW-1185">Reference proteome</keyword>
<proteinExistence type="inferred from homology"/>
<protein>
    <recommendedName>
        <fullName evidence="1">Sugar fermentation stimulation protein homolog</fullName>
    </recommendedName>
</protein>
<name>SFSA_ALKOO</name>
<reference key="1">
    <citation type="submission" date="2007-10" db="EMBL/GenBank/DDBJ databases">
        <title>Complete genome of Alkaliphilus oremlandii OhILAs.</title>
        <authorList>
            <person name="Copeland A."/>
            <person name="Lucas S."/>
            <person name="Lapidus A."/>
            <person name="Barry K."/>
            <person name="Detter J.C."/>
            <person name="Glavina del Rio T."/>
            <person name="Hammon N."/>
            <person name="Israni S."/>
            <person name="Dalin E."/>
            <person name="Tice H."/>
            <person name="Pitluck S."/>
            <person name="Chain P."/>
            <person name="Malfatti S."/>
            <person name="Shin M."/>
            <person name="Vergez L."/>
            <person name="Schmutz J."/>
            <person name="Larimer F."/>
            <person name="Land M."/>
            <person name="Hauser L."/>
            <person name="Kyrpides N."/>
            <person name="Mikhailova N."/>
            <person name="Stolz J.F."/>
            <person name="Dawson A."/>
            <person name="Fisher E."/>
            <person name="Crable B."/>
            <person name="Perera E."/>
            <person name="Lisak J."/>
            <person name="Ranganathan M."/>
            <person name="Basu P."/>
            <person name="Richardson P."/>
        </authorList>
    </citation>
    <scope>NUCLEOTIDE SEQUENCE [LARGE SCALE GENOMIC DNA]</scope>
    <source>
        <strain>OhILAs</strain>
    </source>
</reference>